<proteinExistence type="evidence at protein level"/>
<feature type="peptide" id="PRO_0000365777" description="Pyrokinin" evidence="3">
    <location>
        <begin position="1"/>
        <end position="8"/>
    </location>
</feature>
<feature type="modified residue" description="Leucine amide" evidence="3">
    <location>
        <position position="8"/>
    </location>
</feature>
<feature type="unsure residue" description="L or I" evidence="3">
    <location>
        <position position="8"/>
    </location>
</feature>
<accession>P85827</accession>
<dbReference type="InParanoid" id="P85827"/>
<dbReference type="Proteomes" id="UP000015103">
    <property type="component" value="Unassembled WGS sequence"/>
</dbReference>
<dbReference type="GO" id="GO:0005576">
    <property type="term" value="C:extracellular region"/>
    <property type="evidence" value="ECO:0007669"/>
    <property type="project" value="UniProtKB-SubCell"/>
</dbReference>
<dbReference type="GO" id="GO:0007218">
    <property type="term" value="P:neuropeptide signaling pathway"/>
    <property type="evidence" value="ECO:0007669"/>
    <property type="project" value="UniProtKB-KW"/>
</dbReference>
<comment type="function">
    <text evidence="1">Mediates visceral muscle contractile activity (myotropic activity).</text>
</comment>
<comment type="subcellular location">
    <subcellularLocation>
        <location evidence="5">Secreted</location>
    </subcellularLocation>
</comment>
<comment type="PTM">
    <text evidence="3">Position 8 could be leucine amide or isoleucine amide.</text>
</comment>
<comment type="mass spectrometry" mass="883.51" method="MALDI" evidence="3"/>
<comment type="similarity">
    <text evidence="2">Belongs to the pyrokinin family.</text>
</comment>
<keyword id="KW-0027">Amidation</keyword>
<keyword id="KW-0903">Direct protein sequencing</keyword>
<keyword id="KW-0527">Neuropeptide</keyword>
<keyword id="KW-1185">Reference proteome</keyword>
<keyword id="KW-0964">Secreted</keyword>
<protein>
    <recommendedName>
        <fullName evidence="4">Pyrokinin</fullName>
        <shortName evidence="4">Rhopr-PK</shortName>
    </recommendedName>
    <alternativeName>
        <fullName evidence="1">FXPRL-amide</fullName>
    </alternativeName>
</protein>
<sequence length="8" mass="884">SPPFAPRL</sequence>
<reference evidence="5" key="1">
    <citation type="journal article" date="2009" name="Proteomics">
        <title>The neuropeptidome of Rhodnius prolixus brain.</title>
        <authorList>
            <person name="Ons S."/>
            <person name="Richter F."/>
            <person name="Urlaub H."/>
            <person name="Pomar R.R."/>
        </authorList>
    </citation>
    <scope>PROTEIN SEQUENCE</scope>
    <scope>MASS SPECTROMETRY</scope>
    <scope>AMIDATION AT LEU-8</scope>
    <source>
        <tissue evidence="3">Brain</tissue>
    </source>
</reference>
<name>PPK_RHOPR</name>
<organism>
    <name type="scientific">Rhodnius prolixus</name>
    <name type="common">Triatomid bug</name>
    <dbReference type="NCBI Taxonomy" id="13249"/>
    <lineage>
        <taxon>Eukaryota</taxon>
        <taxon>Metazoa</taxon>
        <taxon>Ecdysozoa</taxon>
        <taxon>Arthropoda</taxon>
        <taxon>Hexapoda</taxon>
        <taxon>Insecta</taxon>
        <taxon>Pterygota</taxon>
        <taxon>Neoptera</taxon>
        <taxon>Paraneoptera</taxon>
        <taxon>Hemiptera</taxon>
        <taxon>Heteroptera</taxon>
        <taxon>Panheteroptera</taxon>
        <taxon>Cimicomorpha</taxon>
        <taxon>Reduviidae</taxon>
        <taxon>Triatominae</taxon>
        <taxon>Rhodnius</taxon>
    </lineage>
</organism>
<evidence type="ECO:0000250" key="1">
    <source>
        <dbReference type="UniProtKB" id="P82692"/>
    </source>
</evidence>
<evidence type="ECO:0000255" key="2"/>
<evidence type="ECO:0000269" key="3">
    <source>
    </source>
</evidence>
<evidence type="ECO:0000303" key="4">
    <source>
    </source>
</evidence>
<evidence type="ECO:0000305" key="5"/>